<accession>P0A2X5</accession>
<accession>Q925X9</accession>
<feature type="chain" id="PRO_0000149405" description="Adenine phosphoribosyltransferase">
    <location>
        <begin position="1"/>
        <end position="173"/>
    </location>
</feature>
<protein>
    <recommendedName>
        <fullName evidence="1">Adenine phosphoribosyltransferase</fullName>
        <shortName evidence="1">APRT</shortName>
        <ecNumber evidence="1">2.4.2.7</ecNumber>
    </recommendedName>
</protein>
<comment type="function">
    <text evidence="1">Catalyzes a salvage reaction resulting in the formation of AMP, that is energically less costly than de novo synthesis.</text>
</comment>
<comment type="catalytic activity">
    <reaction evidence="1">
        <text>AMP + diphosphate = 5-phospho-alpha-D-ribose 1-diphosphate + adenine</text>
        <dbReference type="Rhea" id="RHEA:16609"/>
        <dbReference type="ChEBI" id="CHEBI:16708"/>
        <dbReference type="ChEBI" id="CHEBI:33019"/>
        <dbReference type="ChEBI" id="CHEBI:58017"/>
        <dbReference type="ChEBI" id="CHEBI:456215"/>
        <dbReference type="EC" id="2.4.2.7"/>
    </reaction>
</comment>
<comment type="pathway">
    <text evidence="1">Purine metabolism; AMP biosynthesis via salvage pathway; AMP from adenine: step 1/1.</text>
</comment>
<comment type="subunit">
    <text evidence="1">Homodimer.</text>
</comment>
<comment type="subcellular location">
    <subcellularLocation>
        <location evidence="1">Cytoplasm</location>
    </subcellularLocation>
</comment>
<comment type="similarity">
    <text evidence="1">Belongs to the purine/pyrimidine phosphoribosyltransferase family.</text>
</comment>
<organism>
    <name type="scientific">Listeria monocytogenes serovar 1/2a (strain ATCC BAA-679 / EGD-e)</name>
    <dbReference type="NCBI Taxonomy" id="169963"/>
    <lineage>
        <taxon>Bacteria</taxon>
        <taxon>Bacillati</taxon>
        <taxon>Bacillota</taxon>
        <taxon>Bacilli</taxon>
        <taxon>Bacillales</taxon>
        <taxon>Listeriaceae</taxon>
        <taxon>Listeria</taxon>
    </lineage>
</organism>
<keyword id="KW-0963">Cytoplasm</keyword>
<keyword id="KW-0328">Glycosyltransferase</keyword>
<keyword id="KW-0660">Purine salvage</keyword>
<keyword id="KW-1185">Reference proteome</keyword>
<keyword id="KW-0808">Transferase</keyword>
<proteinExistence type="inferred from homology"/>
<sequence>MEIKDLQDYVAIVNDWPKKGIVFKDITPLMNDGEAYRFATDKIVEYAKELKIDIIVGPEARGFIIGCPVAYALGIGFAPVRKPGKLPRETIEMEYDLEYGTNKLSMHSDAIKPGQRVLITDDLLATGGTIEATIKLVEELGGIVAGCAFLIELKELEGHKKLNGYDRLILMKL</sequence>
<name>APT_LISMO</name>
<evidence type="ECO:0000255" key="1">
    <source>
        <dbReference type="HAMAP-Rule" id="MF_00004"/>
    </source>
</evidence>
<dbReference type="EC" id="2.4.2.7" evidence="1"/>
<dbReference type="EMBL" id="AB051847">
    <property type="protein sequence ID" value="BAB60669.1"/>
    <property type="molecule type" value="Genomic_DNA"/>
</dbReference>
<dbReference type="EMBL" id="AL591979">
    <property type="protein sequence ID" value="CAC99602.1"/>
    <property type="molecule type" value="Genomic_DNA"/>
</dbReference>
<dbReference type="PIR" id="AD1265">
    <property type="entry name" value="AD1265"/>
</dbReference>
<dbReference type="RefSeq" id="NP_465049.1">
    <property type="nucleotide sequence ID" value="NC_003210.1"/>
</dbReference>
<dbReference type="RefSeq" id="WP_003723528.1">
    <property type="nucleotide sequence ID" value="NZ_CP149495.1"/>
</dbReference>
<dbReference type="SMR" id="P0A2X5"/>
<dbReference type="STRING" id="169963.gene:17594181"/>
<dbReference type="PaxDb" id="169963-lmo1524"/>
<dbReference type="EnsemblBacteria" id="CAC99602">
    <property type="protein sequence ID" value="CAC99602"/>
    <property type="gene ID" value="CAC99602"/>
</dbReference>
<dbReference type="GeneID" id="987786"/>
<dbReference type="KEGG" id="lmo:lmo1524"/>
<dbReference type="PATRIC" id="fig|169963.11.peg.1565"/>
<dbReference type="eggNOG" id="COG0503">
    <property type="taxonomic scope" value="Bacteria"/>
</dbReference>
<dbReference type="HOGENOM" id="CLU_063339_3_0_9"/>
<dbReference type="OrthoDB" id="9803963at2"/>
<dbReference type="PhylomeDB" id="P0A2X5"/>
<dbReference type="BioCyc" id="LMON169963:LMO1524-MONOMER"/>
<dbReference type="UniPathway" id="UPA00588">
    <property type="reaction ID" value="UER00646"/>
</dbReference>
<dbReference type="Proteomes" id="UP000000817">
    <property type="component" value="Chromosome"/>
</dbReference>
<dbReference type="GO" id="GO:0005737">
    <property type="term" value="C:cytoplasm"/>
    <property type="evidence" value="ECO:0000318"/>
    <property type="project" value="GO_Central"/>
</dbReference>
<dbReference type="GO" id="GO:0002055">
    <property type="term" value="F:adenine binding"/>
    <property type="evidence" value="ECO:0000318"/>
    <property type="project" value="GO_Central"/>
</dbReference>
<dbReference type="GO" id="GO:0003999">
    <property type="term" value="F:adenine phosphoribosyltransferase activity"/>
    <property type="evidence" value="ECO:0000318"/>
    <property type="project" value="GO_Central"/>
</dbReference>
<dbReference type="GO" id="GO:0016208">
    <property type="term" value="F:AMP binding"/>
    <property type="evidence" value="ECO:0000318"/>
    <property type="project" value="GO_Central"/>
</dbReference>
<dbReference type="GO" id="GO:0006168">
    <property type="term" value="P:adenine salvage"/>
    <property type="evidence" value="ECO:0000318"/>
    <property type="project" value="GO_Central"/>
</dbReference>
<dbReference type="GO" id="GO:0044209">
    <property type="term" value="P:AMP salvage"/>
    <property type="evidence" value="ECO:0000318"/>
    <property type="project" value="GO_Central"/>
</dbReference>
<dbReference type="GO" id="GO:0006166">
    <property type="term" value="P:purine ribonucleoside salvage"/>
    <property type="evidence" value="ECO:0007669"/>
    <property type="project" value="UniProtKB-KW"/>
</dbReference>
<dbReference type="CDD" id="cd06223">
    <property type="entry name" value="PRTases_typeI"/>
    <property type="match status" value="1"/>
</dbReference>
<dbReference type="FunFam" id="3.40.50.2020:FF:000004">
    <property type="entry name" value="Adenine phosphoribosyltransferase"/>
    <property type="match status" value="1"/>
</dbReference>
<dbReference type="Gene3D" id="3.40.50.2020">
    <property type="match status" value="1"/>
</dbReference>
<dbReference type="HAMAP" id="MF_00004">
    <property type="entry name" value="Aden_phosphoribosyltr"/>
    <property type="match status" value="1"/>
</dbReference>
<dbReference type="InterPro" id="IPR005764">
    <property type="entry name" value="Ade_phspho_trans"/>
</dbReference>
<dbReference type="InterPro" id="IPR000836">
    <property type="entry name" value="PRibTrfase_dom"/>
</dbReference>
<dbReference type="InterPro" id="IPR029057">
    <property type="entry name" value="PRTase-like"/>
</dbReference>
<dbReference type="InterPro" id="IPR050054">
    <property type="entry name" value="UPRTase/APRTase"/>
</dbReference>
<dbReference type="NCBIfam" id="TIGR01090">
    <property type="entry name" value="apt"/>
    <property type="match status" value="1"/>
</dbReference>
<dbReference type="NCBIfam" id="NF002633">
    <property type="entry name" value="PRK02304.1-2"/>
    <property type="match status" value="1"/>
</dbReference>
<dbReference type="NCBIfam" id="NF002634">
    <property type="entry name" value="PRK02304.1-3"/>
    <property type="match status" value="1"/>
</dbReference>
<dbReference type="NCBIfam" id="NF002636">
    <property type="entry name" value="PRK02304.1-5"/>
    <property type="match status" value="1"/>
</dbReference>
<dbReference type="PANTHER" id="PTHR32315">
    <property type="entry name" value="ADENINE PHOSPHORIBOSYLTRANSFERASE"/>
    <property type="match status" value="1"/>
</dbReference>
<dbReference type="PANTHER" id="PTHR32315:SF3">
    <property type="entry name" value="ADENINE PHOSPHORIBOSYLTRANSFERASE"/>
    <property type="match status" value="1"/>
</dbReference>
<dbReference type="Pfam" id="PF00156">
    <property type="entry name" value="Pribosyltran"/>
    <property type="match status" value="1"/>
</dbReference>
<dbReference type="SUPFAM" id="SSF53271">
    <property type="entry name" value="PRTase-like"/>
    <property type="match status" value="1"/>
</dbReference>
<gene>
    <name evidence="1" type="primary">apt</name>
    <name type="ordered locus">lmo1524</name>
</gene>
<reference key="1">
    <citation type="journal article" date="2002" name="Appl. Environ. Microbiol.">
        <title>Cloning of rel from Listeria monocytogenes as an osmotolerance involvement gene.</title>
        <authorList>
            <person name="Okada Y."/>
            <person name="Makino S."/>
            <person name="Tobe T."/>
            <person name="Okada N."/>
            <person name="Yamazaki S."/>
        </authorList>
    </citation>
    <scope>NUCLEOTIDE SEQUENCE [GENOMIC DNA]</scope>
    <source>
        <strain>EGD / Serovar 1/2a</strain>
    </source>
</reference>
<reference key="2">
    <citation type="journal article" date="2001" name="Science">
        <title>Comparative genomics of Listeria species.</title>
        <authorList>
            <person name="Glaser P."/>
            <person name="Frangeul L."/>
            <person name="Buchrieser C."/>
            <person name="Rusniok C."/>
            <person name="Amend A."/>
            <person name="Baquero F."/>
            <person name="Berche P."/>
            <person name="Bloecker H."/>
            <person name="Brandt P."/>
            <person name="Chakraborty T."/>
            <person name="Charbit A."/>
            <person name="Chetouani F."/>
            <person name="Couve E."/>
            <person name="de Daruvar A."/>
            <person name="Dehoux P."/>
            <person name="Domann E."/>
            <person name="Dominguez-Bernal G."/>
            <person name="Duchaud E."/>
            <person name="Durant L."/>
            <person name="Dussurget O."/>
            <person name="Entian K.-D."/>
            <person name="Fsihi H."/>
            <person name="Garcia-del Portillo F."/>
            <person name="Garrido P."/>
            <person name="Gautier L."/>
            <person name="Goebel W."/>
            <person name="Gomez-Lopez N."/>
            <person name="Hain T."/>
            <person name="Hauf J."/>
            <person name="Jackson D."/>
            <person name="Jones L.-M."/>
            <person name="Kaerst U."/>
            <person name="Kreft J."/>
            <person name="Kuhn M."/>
            <person name="Kunst F."/>
            <person name="Kurapkat G."/>
            <person name="Madueno E."/>
            <person name="Maitournam A."/>
            <person name="Mata Vicente J."/>
            <person name="Ng E."/>
            <person name="Nedjari H."/>
            <person name="Nordsiek G."/>
            <person name="Novella S."/>
            <person name="de Pablos B."/>
            <person name="Perez-Diaz J.-C."/>
            <person name="Purcell R."/>
            <person name="Remmel B."/>
            <person name="Rose M."/>
            <person name="Schlueter T."/>
            <person name="Simoes N."/>
            <person name="Tierrez A."/>
            <person name="Vazquez-Boland J.-A."/>
            <person name="Voss H."/>
            <person name="Wehland J."/>
            <person name="Cossart P."/>
        </authorList>
    </citation>
    <scope>NUCLEOTIDE SEQUENCE [LARGE SCALE GENOMIC DNA]</scope>
    <source>
        <strain>ATCC BAA-679 / EGD-e</strain>
    </source>
</reference>